<feature type="chain" id="PRO_1000089311" description="Adenylosuccinate synthetase">
    <location>
        <begin position="1"/>
        <end position="429"/>
    </location>
</feature>
<feature type="active site" description="Proton acceptor" evidence="1">
    <location>
        <position position="13"/>
    </location>
</feature>
<feature type="active site" description="Proton donor" evidence="1">
    <location>
        <position position="41"/>
    </location>
</feature>
<feature type="binding site" evidence="1">
    <location>
        <begin position="12"/>
        <end position="18"/>
    </location>
    <ligand>
        <name>GTP</name>
        <dbReference type="ChEBI" id="CHEBI:37565"/>
    </ligand>
</feature>
<feature type="binding site" description="in other chain" evidence="1">
    <location>
        <begin position="13"/>
        <end position="16"/>
    </location>
    <ligand>
        <name>IMP</name>
        <dbReference type="ChEBI" id="CHEBI:58053"/>
        <note>ligand shared between dimeric partners</note>
    </ligand>
</feature>
<feature type="binding site" evidence="1">
    <location>
        <position position="13"/>
    </location>
    <ligand>
        <name>Mg(2+)</name>
        <dbReference type="ChEBI" id="CHEBI:18420"/>
    </ligand>
</feature>
<feature type="binding site" description="in other chain" evidence="1">
    <location>
        <begin position="38"/>
        <end position="41"/>
    </location>
    <ligand>
        <name>IMP</name>
        <dbReference type="ChEBI" id="CHEBI:58053"/>
        <note>ligand shared between dimeric partners</note>
    </ligand>
</feature>
<feature type="binding site" evidence="1">
    <location>
        <begin position="40"/>
        <end position="42"/>
    </location>
    <ligand>
        <name>GTP</name>
        <dbReference type="ChEBI" id="CHEBI:37565"/>
    </ligand>
</feature>
<feature type="binding site" evidence="1">
    <location>
        <position position="40"/>
    </location>
    <ligand>
        <name>Mg(2+)</name>
        <dbReference type="ChEBI" id="CHEBI:18420"/>
    </ligand>
</feature>
<feature type="binding site" description="in other chain" evidence="1">
    <location>
        <position position="128"/>
    </location>
    <ligand>
        <name>IMP</name>
        <dbReference type="ChEBI" id="CHEBI:58053"/>
        <note>ligand shared between dimeric partners</note>
    </ligand>
</feature>
<feature type="binding site" evidence="1">
    <location>
        <position position="142"/>
    </location>
    <ligand>
        <name>IMP</name>
        <dbReference type="ChEBI" id="CHEBI:58053"/>
        <note>ligand shared between dimeric partners</note>
    </ligand>
</feature>
<feature type="binding site" description="in other chain" evidence="1">
    <location>
        <position position="223"/>
    </location>
    <ligand>
        <name>IMP</name>
        <dbReference type="ChEBI" id="CHEBI:58053"/>
        <note>ligand shared between dimeric partners</note>
    </ligand>
</feature>
<feature type="binding site" description="in other chain" evidence="1">
    <location>
        <position position="238"/>
    </location>
    <ligand>
        <name>IMP</name>
        <dbReference type="ChEBI" id="CHEBI:58053"/>
        <note>ligand shared between dimeric partners</note>
    </ligand>
</feature>
<feature type="binding site" evidence="1">
    <location>
        <begin position="298"/>
        <end position="304"/>
    </location>
    <ligand>
        <name>substrate</name>
    </ligand>
</feature>
<feature type="binding site" description="in other chain" evidence="1">
    <location>
        <position position="302"/>
    </location>
    <ligand>
        <name>IMP</name>
        <dbReference type="ChEBI" id="CHEBI:58053"/>
        <note>ligand shared between dimeric partners</note>
    </ligand>
</feature>
<feature type="binding site" evidence="1">
    <location>
        <position position="304"/>
    </location>
    <ligand>
        <name>GTP</name>
        <dbReference type="ChEBI" id="CHEBI:37565"/>
    </ligand>
</feature>
<feature type="binding site" evidence="1">
    <location>
        <begin position="330"/>
        <end position="332"/>
    </location>
    <ligand>
        <name>GTP</name>
        <dbReference type="ChEBI" id="CHEBI:37565"/>
    </ligand>
</feature>
<feature type="binding site" evidence="1">
    <location>
        <begin position="412"/>
        <end position="414"/>
    </location>
    <ligand>
        <name>GTP</name>
        <dbReference type="ChEBI" id="CHEBI:37565"/>
    </ligand>
</feature>
<organism>
    <name type="scientific">Lysinibacillus sphaericus (strain C3-41)</name>
    <dbReference type="NCBI Taxonomy" id="444177"/>
    <lineage>
        <taxon>Bacteria</taxon>
        <taxon>Bacillati</taxon>
        <taxon>Bacillota</taxon>
        <taxon>Bacilli</taxon>
        <taxon>Bacillales</taxon>
        <taxon>Bacillaceae</taxon>
        <taxon>Lysinibacillus</taxon>
    </lineage>
</organism>
<reference key="1">
    <citation type="journal article" date="2008" name="J. Bacteriol.">
        <title>Complete genome sequence of the mosquitocidal bacterium Bacillus sphaericus C3-41 and comparison with those of closely related Bacillus species.</title>
        <authorList>
            <person name="Hu X."/>
            <person name="Fan W."/>
            <person name="Han B."/>
            <person name="Liu H."/>
            <person name="Zheng D."/>
            <person name="Li Q."/>
            <person name="Dong W."/>
            <person name="Yan J."/>
            <person name="Gao M."/>
            <person name="Berry C."/>
            <person name="Yuan Z."/>
        </authorList>
    </citation>
    <scope>NUCLEOTIDE SEQUENCE [LARGE SCALE GENOMIC DNA]</scope>
    <source>
        <strain>C3-41</strain>
    </source>
</reference>
<keyword id="KW-0963">Cytoplasm</keyword>
<keyword id="KW-0342">GTP-binding</keyword>
<keyword id="KW-0436">Ligase</keyword>
<keyword id="KW-0460">Magnesium</keyword>
<keyword id="KW-0479">Metal-binding</keyword>
<keyword id="KW-0547">Nucleotide-binding</keyword>
<keyword id="KW-0658">Purine biosynthesis</keyword>
<gene>
    <name evidence="1" type="primary">purA</name>
    <name type="ordered locus">Bsph_4762</name>
</gene>
<sequence>MTSVVVVGTQWGDEGKGKITDFLSQKADAIARFAGGDNAGHTIKIDGETYKLHLIPSGIFYKEKTSVIGNGLVVNPKSLVTELKGLQERGINTDNLRISNRAHVILPYHIKQDIADEESRGDNKIGTTCKGIGPCYQDKVARIGIRMADLLDKDIFEEKLRHNLAIKNKLFEKFYEVEGLTFEEIFEEYYGYGQEIAKYVTDTSKILNDVLDEGGKVLFEGAQGILLDVDQGTYPYVTSSNPVAGGVAIGAGVGPSRVTSVIGVSKAYTSRVGDGPFPTELFDEVGQQIREVGREYGTTTGRPRRVGWFDTVVVRHSRRVSGITHLALNSIDVLSGLETVKICTAYNYKGETITEYPANLHIIEQCEPIYEELPGWSEDVTACRTLEELPENARRYVERVSELTGIQIATFSVGPAREQTNVLVDVWEA</sequence>
<comment type="function">
    <text evidence="1">Plays an important role in the de novo pathway of purine nucleotide biosynthesis. Catalyzes the first committed step in the biosynthesis of AMP from IMP.</text>
</comment>
<comment type="catalytic activity">
    <reaction evidence="1">
        <text>IMP + L-aspartate + GTP = N(6)-(1,2-dicarboxyethyl)-AMP + GDP + phosphate + 2 H(+)</text>
        <dbReference type="Rhea" id="RHEA:15753"/>
        <dbReference type="ChEBI" id="CHEBI:15378"/>
        <dbReference type="ChEBI" id="CHEBI:29991"/>
        <dbReference type="ChEBI" id="CHEBI:37565"/>
        <dbReference type="ChEBI" id="CHEBI:43474"/>
        <dbReference type="ChEBI" id="CHEBI:57567"/>
        <dbReference type="ChEBI" id="CHEBI:58053"/>
        <dbReference type="ChEBI" id="CHEBI:58189"/>
        <dbReference type="EC" id="6.3.4.4"/>
    </reaction>
</comment>
<comment type="cofactor">
    <cofactor evidence="1">
        <name>Mg(2+)</name>
        <dbReference type="ChEBI" id="CHEBI:18420"/>
    </cofactor>
    <text evidence="1">Binds 1 Mg(2+) ion per subunit.</text>
</comment>
<comment type="pathway">
    <text evidence="1">Purine metabolism; AMP biosynthesis via de novo pathway; AMP from IMP: step 1/2.</text>
</comment>
<comment type="subunit">
    <text evidence="1">Homodimer.</text>
</comment>
<comment type="subcellular location">
    <subcellularLocation>
        <location evidence="1">Cytoplasm</location>
    </subcellularLocation>
</comment>
<comment type="similarity">
    <text evidence="1">Belongs to the adenylosuccinate synthetase family.</text>
</comment>
<protein>
    <recommendedName>
        <fullName evidence="1">Adenylosuccinate synthetase</fullName>
        <shortName evidence="1">AMPSase</shortName>
        <shortName evidence="1">AdSS</shortName>
        <ecNumber evidence="1">6.3.4.4</ecNumber>
    </recommendedName>
    <alternativeName>
        <fullName evidence="1">IMP--aspartate ligase</fullName>
    </alternativeName>
</protein>
<accession>B1HPK4</accession>
<dbReference type="EC" id="6.3.4.4" evidence="1"/>
<dbReference type="EMBL" id="CP000817">
    <property type="protein sequence ID" value="ACA42206.1"/>
    <property type="molecule type" value="Genomic_DNA"/>
</dbReference>
<dbReference type="RefSeq" id="WP_012296206.1">
    <property type="nucleotide sequence ID" value="NC_010382.1"/>
</dbReference>
<dbReference type="SMR" id="B1HPK4"/>
<dbReference type="EnsemblBacteria" id="ACA42206">
    <property type="protein sequence ID" value="ACA42206"/>
    <property type="gene ID" value="Bsph_4762"/>
</dbReference>
<dbReference type="KEGG" id="lsp:Bsph_4762"/>
<dbReference type="HOGENOM" id="CLU_029848_0_0_9"/>
<dbReference type="UniPathway" id="UPA00075">
    <property type="reaction ID" value="UER00335"/>
</dbReference>
<dbReference type="Proteomes" id="UP000002164">
    <property type="component" value="Chromosome"/>
</dbReference>
<dbReference type="GO" id="GO:0005737">
    <property type="term" value="C:cytoplasm"/>
    <property type="evidence" value="ECO:0007669"/>
    <property type="project" value="UniProtKB-SubCell"/>
</dbReference>
<dbReference type="GO" id="GO:0004019">
    <property type="term" value="F:adenylosuccinate synthase activity"/>
    <property type="evidence" value="ECO:0007669"/>
    <property type="project" value="UniProtKB-UniRule"/>
</dbReference>
<dbReference type="GO" id="GO:0005525">
    <property type="term" value="F:GTP binding"/>
    <property type="evidence" value="ECO:0007669"/>
    <property type="project" value="UniProtKB-UniRule"/>
</dbReference>
<dbReference type="GO" id="GO:0000287">
    <property type="term" value="F:magnesium ion binding"/>
    <property type="evidence" value="ECO:0007669"/>
    <property type="project" value="UniProtKB-UniRule"/>
</dbReference>
<dbReference type="GO" id="GO:0044208">
    <property type="term" value="P:'de novo' AMP biosynthetic process"/>
    <property type="evidence" value="ECO:0007669"/>
    <property type="project" value="UniProtKB-UniRule"/>
</dbReference>
<dbReference type="GO" id="GO:0046040">
    <property type="term" value="P:IMP metabolic process"/>
    <property type="evidence" value="ECO:0007669"/>
    <property type="project" value="TreeGrafter"/>
</dbReference>
<dbReference type="CDD" id="cd03108">
    <property type="entry name" value="AdSS"/>
    <property type="match status" value="1"/>
</dbReference>
<dbReference type="FunFam" id="1.10.300.10:FF:000001">
    <property type="entry name" value="Adenylosuccinate synthetase"/>
    <property type="match status" value="1"/>
</dbReference>
<dbReference type="FunFam" id="3.90.170.10:FF:000001">
    <property type="entry name" value="Adenylosuccinate synthetase"/>
    <property type="match status" value="1"/>
</dbReference>
<dbReference type="Gene3D" id="3.40.440.10">
    <property type="entry name" value="Adenylosuccinate Synthetase, subunit A, domain 1"/>
    <property type="match status" value="1"/>
</dbReference>
<dbReference type="Gene3D" id="1.10.300.10">
    <property type="entry name" value="Adenylosuccinate Synthetase, subunit A, domain 2"/>
    <property type="match status" value="1"/>
</dbReference>
<dbReference type="Gene3D" id="3.90.170.10">
    <property type="entry name" value="Adenylosuccinate Synthetase, subunit A, domain 3"/>
    <property type="match status" value="1"/>
</dbReference>
<dbReference type="HAMAP" id="MF_00011">
    <property type="entry name" value="Adenylosucc_synth"/>
    <property type="match status" value="1"/>
</dbReference>
<dbReference type="InterPro" id="IPR018220">
    <property type="entry name" value="Adenylosuccin_syn_GTP-bd"/>
</dbReference>
<dbReference type="InterPro" id="IPR033128">
    <property type="entry name" value="Adenylosuccin_syn_Lys_AS"/>
</dbReference>
<dbReference type="InterPro" id="IPR042109">
    <property type="entry name" value="Adenylosuccinate_synth_dom1"/>
</dbReference>
<dbReference type="InterPro" id="IPR042110">
    <property type="entry name" value="Adenylosuccinate_synth_dom2"/>
</dbReference>
<dbReference type="InterPro" id="IPR042111">
    <property type="entry name" value="Adenylosuccinate_synth_dom3"/>
</dbReference>
<dbReference type="InterPro" id="IPR001114">
    <property type="entry name" value="Adenylosuccinate_synthetase"/>
</dbReference>
<dbReference type="InterPro" id="IPR027417">
    <property type="entry name" value="P-loop_NTPase"/>
</dbReference>
<dbReference type="NCBIfam" id="NF002223">
    <property type="entry name" value="PRK01117.1"/>
    <property type="match status" value="1"/>
</dbReference>
<dbReference type="NCBIfam" id="TIGR00184">
    <property type="entry name" value="purA"/>
    <property type="match status" value="1"/>
</dbReference>
<dbReference type="PANTHER" id="PTHR11846">
    <property type="entry name" value="ADENYLOSUCCINATE SYNTHETASE"/>
    <property type="match status" value="1"/>
</dbReference>
<dbReference type="PANTHER" id="PTHR11846:SF0">
    <property type="entry name" value="ADENYLOSUCCINATE SYNTHETASE"/>
    <property type="match status" value="1"/>
</dbReference>
<dbReference type="Pfam" id="PF00709">
    <property type="entry name" value="Adenylsucc_synt"/>
    <property type="match status" value="1"/>
</dbReference>
<dbReference type="SMART" id="SM00788">
    <property type="entry name" value="Adenylsucc_synt"/>
    <property type="match status" value="1"/>
</dbReference>
<dbReference type="SUPFAM" id="SSF52540">
    <property type="entry name" value="P-loop containing nucleoside triphosphate hydrolases"/>
    <property type="match status" value="1"/>
</dbReference>
<dbReference type="PROSITE" id="PS01266">
    <property type="entry name" value="ADENYLOSUCCIN_SYN_1"/>
    <property type="match status" value="1"/>
</dbReference>
<dbReference type="PROSITE" id="PS00513">
    <property type="entry name" value="ADENYLOSUCCIN_SYN_2"/>
    <property type="match status" value="1"/>
</dbReference>
<name>PURA_LYSSC</name>
<proteinExistence type="inferred from homology"/>
<evidence type="ECO:0000255" key="1">
    <source>
        <dbReference type="HAMAP-Rule" id="MF_00011"/>
    </source>
</evidence>